<evidence type="ECO:0000255" key="1">
    <source>
        <dbReference type="HAMAP-Rule" id="MF_01909"/>
    </source>
</evidence>
<name>TFE_CALMQ</name>
<gene>
    <name evidence="1" type="primary">tfe</name>
    <name type="ordered locus">Cmaq_1388</name>
</gene>
<reference key="1">
    <citation type="submission" date="2007-10" db="EMBL/GenBank/DDBJ databases">
        <title>Complete sequence of Caldivirga maquilingensis IC-167.</title>
        <authorList>
            <consortium name="US DOE Joint Genome Institute"/>
            <person name="Copeland A."/>
            <person name="Lucas S."/>
            <person name="Lapidus A."/>
            <person name="Barry K."/>
            <person name="Glavina del Rio T."/>
            <person name="Dalin E."/>
            <person name="Tice H."/>
            <person name="Pitluck S."/>
            <person name="Saunders E."/>
            <person name="Brettin T."/>
            <person name="Bruce D."/>
            <person name="Detter J.C."/>
            <person name="Han C."/>
            <person name="Schmutz J."/>
            <person name="Larimer F."/>
            <person name="Land M."/>
            <person name="Hauser L."/>
            <person name="Kyrpides N."/>
            <person name="Ivanova N."/>
            <person name="Biddle J.F."/>
            <person name="Zhang Z."/>
            <person name="Fitz-Gibbon S.T."/>
            <person name="Lowe T.M."/>
            <person name="Saltikov C."/>
            <person name="House C.H."/>
            <person name="Richardson P."/>
        </authorList>
    </citation>
    <scope>NUCLEOTIDE SEQUENCE [LARGE SCALE GENOMIC DNA]</scope>
    <source>
        <strain>ATCC 700844 / DSM 13496 / JCM 10307 / IC-167</strain>
    </source>
</reference>
<organism>
    <name type="scientific">Caldivirga maquilingensis (strain ATCC 700844 / DSM 13496 / JCM 10307 / IC-167)</name>
    <dbReference type="NCBI Taxonomy" id="397948"/>
    <lineage>
        <taxon>Archaea</taxon>
        <taxon>Thermoproteota</taxon>
        <taxon>Thermoprotei</taxon>
        <taxon>Thermoproteales</taxon>
        <taxon>Thermoproteaceae</taxon>
        <taxon>Caldivirga</taxon>
    </lineage>
</organism>
<feature type="chain" id="PRO_1000088479" description="Transcription factor E">
    <location>
        <begin position="1"/>
        <end position="183"/>
    </location>
</feature>
<feature type="domain" description="HTH TFE/IIEalpha-type" evidence="1">
    <location>
        <begin position="4"/>
        <end position="97"/>
    </location>
</feature>
<sequence>MQPYIELVRRYVYRRILIEFGDDELGKLAVAIFNTLLSRGEAMTDDKLTSIVGYNAIDVRRILQALYNMRLASVVEEFNEAAGRIEQSWSIKDEDIRRFLINLIGGVLDKVGVLMQQLTNTPIYICPKCFKRYSEDDALMYDYKCPLDRTPLEYINPADYLTVLGAVEARLKKMMESVSKGSV</sequence>
<comment type="function">
    <text evidence="1">Transcription factor that plays a role in the activation of archaeal genes transcribed by RNA polymerase. Facilitates transcription initiation by enhancing TATA-box recognition by TATA-box-binding protein (Tbp), and transcription factor B (Tfb) and RNA polymerase recruitment. Not absolutely required for transcription in vitro, but particularly important in cases where Tbp or Tfb function is not optimal. It dynamically alters the nucleic acid-binding properties of RNA polymerases by stabilizing the initiation complex and destabilizing elongation complexes. Seems to translocate with the RNA polymerase following initiation and acts by binding to the non template strand of the transcription bubble in elongation complexes.</text>
</comment>
<comment type="subunit">
    <text evidence="1">Monomer. Interaction with RNA polymerase subunits RpoF and RpoE is necessary for Tfe stimulatory transcription activity. Able to interact with Tbp and RNA polymerase in the absence of DNA promoter. Interacts both with the preinitiation and elongation complexes.</text>
</comment>
<comment type="domain">
    <text evidence="1">The winged helix domain is involved in binding to DNA in the preinitiation complex.</text>
</comment>
<comment type="similarity">
    <text evidence="1">Belongs to the TFE family.</text>
</comment>
<accession>A8M8Z5</accession>
<proteinExistence type="inferred from homology"/>
<protein>
    <recommendedName>
        <fullName evidence="1">Transcription factor E</fullName>
        <shortName evidence="1">TFE</shortName>
    </recommendedName>
    <alternativeName>
        <fullName evidence="1">TFIIE subunit alpha homolog</fullName>
    </alternativeName>
    <alternativeName>
        <fullName evidence="1">Transcription initiation factor TFIIE</fullName>
    </alternativeName>
</protein>
<keyword id="KW-0238">DNA-binding</keyword>
<keyword id="KW-1185">Reference proteome</keyword>
<keyword id="KW-0804">Transcription</keyword>
<keyword id="KW-0805">Transcription regulation</keyword>
<dbReference type="EMBL" id="CP000852">
    <property type="protein sequence ID" value="ABW02214.1"/>
    <property type="molecule type" value="Genomic_DNA"/>
</dbReference>
<dbReference type="RefSeq" id="WP_012186433.1">
    <property type="nucleotide sequence ID" value="NC_009954.1"/>
</dbReference>
<dbReference type="SMR" id="A8M8Z5"/>
<dbReference type="STRING" id="397948.Cmaq_1388"/>
<dbReference type="GeneID" id="5709393"/>
<dbReference type="KEGG" id="cma:Cmaq_1388"/>
<dbReference type="eggNOG" id="arCOG04270">
    <property type="taxonomic scope" value="Archaea"/>
</dbReference>
<dbReference type="HOGENOM" id="CLU_100097_1_0_2"/>
<dbReference type="OrthoDB" id="5935at2157"/>
<dbReference type="Proteomes" id="UP000001137">
    <property type="component" value="Chromosome"/>
</dbReference>
<dbReference type="GO" id="GO:0003677">
    <property type="term" value="F:DNA binding"/>
    <property type="evidence" value="ECO:0007669"/>
    <property type="project" value="UniProtKB-KW"/>
</dbReference>
<dbReference type="GO" id="GO:0006355">
    <property type="term" value="P:regulation of DNA-templated transcription"/>
    <property type="evidence" value="ECO:0007669"/>
    <property type="project" value="InterPro"/>
</dbReference>
<dbReference type="GO" id="GO:0006367">
    <property type="term" value="P:transcription initiation at RNA polymerase II promoter"/>
    <property type="evidence" value="ECO:0007669"/>
    <property type="project" value="InterPro"/>
</dbReference>
<dbReference type="Gene3D" id="1.10.10.10">
    <property type="entry name" value="Winged helix-like DNA-binding domain superfamily/Winged helix DNA-binding domain"/>
    <property type="match status" value="1"/>
</dbReference>
<dbReference type="HAMAP" id="MF_01909">
    <property type="entry name" value="TFE_arch"/>
    <property type="match status" value="1"/>
</dbReference>
<dbReference type="InterPro" id="IPR016481">
    <property type="entry name" value="TF_E_archaea"/>
</dbReference>
<dbReference type="InterPro" id="IPR017919">
    <property type="entry name" value="TFIIE/TFIIEa_HTH"/>
</dbReference>
<dbReference type="InterPro" id="IPR002853">
    <property type="entry name" value="TFIIE_asu"/>
</dbReference>
<dbReference type="InterPro" id="IPR024550">
    <property type="entry name" value="TFIIEa/SarR/Rpc3_HTH_dom"/>
</dbReference>
<dbReference type="InterPro" id="IPR036388">
    <property type="entry name" value="WH-like_DNA-bd_sf"/>
</dbReference>
<dbReference type="InterPro" id="IPR036390">
    <property type="entry name" value="WH_DNA-bd_sf"/>
</dbReference>
<dbReference type="Pfam" id="PF02002">
    <property type="entry name" value="TFIIE_alpha"/>
    <property type="match status" value="1"/>
</dbReference>
<dbReference type="PIRSF" id="PIRSF006373">
    <property type="entry name" value="TF_E_archaea"/>
    <property type="match status" value="1"/>
</dbReference>
<dbReference type="SMART" id="SM00531">
    <property type="entry name" value="TFIIE"/>
    <property type="match status" value="1"/>
</dbReference>
<dbReference type="SUPFAM" id="SSF46785">
    <property type="entry name" value="Winged helix' DNA-binding domain"/>
    <property type="match status" value="1"/>
</dbReference>
<dbReference type="PROSITE" id="PS51344">
    <property type="entry name" value="HTH_TFE_IIE"/>
    <property type="match status" value="1"/>
</dbReference>